<dbReference type="EMBL" id="CP001616">
    <property type="protein sequence ID" value="ACQ94546.1"/>
    <property type="molecule type" value="Genomic_DNA"/>
</dbReference>
<dbReference type="RefSeq" id="WP_015879995.1">
    <property type="nucleotide sequence ID" value="NC_012691.1"/>
</dbReference>
<dbReference type="SMR" id="C4LD15"/>
<dbReference type="STRING" id="595494.Tola_2957"/>
<dbReference type="KEGG" id="tau:Tola_2957"/>
<dbReference type="eggNOG" id="COG0268">
    <property type="taxonomic scope" value="Bacteria"/>
</dbReference>
<dbReference type="HOGENOM" id="CLU_160655_4_0_6"/>
<dbReference type="OrthoDB" id="9807974at2"/>
<dbReference type="Proteomes" id="UP000009073">
    <property type="component" value="Chromosome"/>
</dbReference>
<dbReference type="GO" id="GO:0005829">
    <property type="term" value="C:cytosol"/>
    <property type="evidence" value="ECO:0007669"/>
    <property type="project" value="TreeGrafter"/>
</dbReference>
<dbReference type="GO" id="GO:0015935">
    <property type="term" value="C:small ribosomal subunit"/>
    <property type="evidence" value="ECO:0007669"/>
    <property type="project" value="TreeGrafter"/>
</dbReference>
<dbReference type="GO" id="GO:0070181">
    <property type="term" value="F:small ribosomal subunit rRNA binding"/>
    <property type="evidence" value="ECO:0007669"/>
    <property type="project" value="TreeGrafter"/>
</dbReference>
<dbReference type="GO" id="GO:0003735">
    <property type="term" value="F:structural constituent of ribosome"/>
    <property type="evidence" value="ECO:0007669"/>
    <property type="project" value="InterPro"/>
</dbReference>
<dbReference type="GO" id="GO:0006412">
    <property type="term" value="P:translation"/>
    <property type="evidence" value="ECO:0007669"/>
    <property type="project" value="UniProtKB-UniRule"/>
</dbReference>
<dbReference type="FunFam" id="1.20.58.110:FF:000001">
    <property type="entry name" value="30S ribosomal protein S20"/>
    <property type="match status" value="1"/>
</dbReference>
<dbReference type="Gene3D" id="1.20.58.110">
    <property type="entry name" value="Ribosomal protein S20"/>
    <property type="match status" value="1"/>
</dbReference>
<dbReference type="HAMAP" id="MF_00500">
    <property type="entry name" value="Ribosomal_bS20"/>
    <property type="match status" value="1"/>
</dbReference>
<dbReference type="InterPro" id="IPR002583">
    <property type="entry name" value="Ribosomal_bS20"/>
</dbReference>
<dbReference type="InterPro" id="IPR036510">
    <property type="entry name" value="Ribosomal_bS20_sf"/>
</dbReference>
<dbReference type="NCBIfam" id="TIGR00029">
    <property type="entry name" value="S20"/>
    <property type="match status" value="1"/>
</dbReference>
<dbReference type="PANTHER" id="PTHR33398">
    <property type="entry name" value="30S RIBOSOMAL PROTEIN S20"/>
    <property type="match status" value="1"/>
</dbReference>
<dbReference type="PANTHER" id="PTHR33398:SF1">
    <property type="entry name" value="SMALL RIBOSOMAL SUBUNIT PROTEIN BS20C"/>
    <property type="match status" value="1"/>
</dbReference>
<dbReference type="Pfam" id="PF01649">
    <property type="entry name" value="Ribosomal_S20p"/>
    <property type="match status" value="1"/>
</dbReference>
<dbReference type="SUPFAM" id="SSF46992">
    <property type="entry name" value="Ribosomal protein S20"/>
    <property type="match status" value="1"/>
</dbReference>
<feature type="chain" id="PRO_1000206512" description="Small ribosomal subunit protein bS20">
    <location>
        <begin position="1"/>
        <end position="87"/>
    </location>
</feature>
<feature type="region of interest" description="Disordered" evidence="2">
    <location>
        <begin position="1"/>
        <end position="26"/>
    </location>
</feature>
<name>RS20_TOLAT</name>
<reference key="1">
    <citation type="submission" date="2009-05" db="EMBL/GenBank/DDBJ databases">
        <title>Complete sequence of Tolumonas auensis DSM 9187.</title>
        <authorList>
            <consortium name="US DOE Joint Genome Institute"/>
            <person name="Lucas S."/>
            <person name="Copeland A."/>
            <person name="Lapidus A."/>
            <person name="Glavina del Rio T."/>
            <person name="Tice H."/>
            <person name="Bruce D."/>
            <person name="Goodwin L."/>
            <person name="Pitluck S."/>
            <person name="Chertkov O."/>
            <person name="Brettin T."/>
            <person name="Detter J.C."/>
            <person name="Han C."/>
            <person name="Larimer F."/>
            <person name="Land M."/>
            <person name="Hauser L."/>
            <person name="Kyrpides N."/>
            <person name="Mikhailova N."/>
            <person name="Spring S."/>
            <person name="Beller H."/>
        </authorList>
    </citation>
    <scope>NUCLEOTIDE SEQUENCE [LARGE SCALE GENOMIC DNA]</scope>
    <source>
        <strain>DSM 9187 / NBRC 110442 / TA 4</strain>
    </source>
</reference>
<organism>
    <name type="scientific">Tolumonas auensis (strain DSM 9187 / NBRC 110442 / TA 4)</name>
    <dbReference type="NCBI Taxonomy" id="595494"/>
    <lineage>
        <taxon>Bacteria</taxon>
        <taxon>Pseudomonadati</taxon>
        <taxon>Pseudomonadota</taxon>
        <taxon>Gammaproteobacteria</taxon>
        <taxon>Aeromonadales</taxon>
        <taxon>Aeromonadaceae</taxon>
        <taxon>Tolumonas</taxon>
    </lineage>
</organism>
<accession>C4LD15</accession>
<evidence type="ECO:0000255" key="1">
    <source>
        <dbReference type="HAMAP-Rule" id="MF_00500"/>
    </source>
</evidence>
<evidence type="ECO:0000256" key="2">
    <source>
        <dbReference type="SAM" id="MobiDB-lite"/>
    </source>
</evidence>
<evidence type="ECO:0000305" key="3"/>
<sequence length="87" mass="9436">MANIKSAKKRAIQAEKARKHNASRRSMTRTFIKKVVAAIASGDKAVAQAAFAAAQPILDRMATKGLIHKNKAARHKSRLSAQIVAMQ</sequence>
<comment type="function">
    <text evidence="1">Binds directly to 16S ribosomal RNA.</text>
</comment>
<comment type="similarity">
    <text evidence="1">Belongs to the bacterial ribosomal protein bS20 family.</text>
</comment>
<gene>
    <name evidence="1" type="primary">rpsT</name>
    <name type="ordered locus">Tola_2957</name>
</gene>
<protein>
    <recommendedName>
        <fullName evidence="1">Small ribosomal subunit protein bS20</fullName>
    </recommendedName>
    <alternativeName>
        <fullName evidence="3">30S ribosomal protein S20</fullName>
    </alternativeName>
</protein>
<keyword id="KW-1185">Reference proteome</keyword>
<keyword id="KW-0687">Ribonucleoprotein</keyword>
<keyword id="KW-0689">Ribosomal protein</keyword>
<keyword id="KW-0694">RNA-binding</keyword>
<keyword id="KW-0699">rRNA-binding</keyword>
<proteinExistence type="inferred from homology"/>